<organism>
    <name type="scientific">Pelotomaculum thermopropionicum (strain DSM 13744 / JCM 10971 / SI)</name>
    <dbReference type="NCBI Taxonomy" id="370438"/>
    <lineage>
        <taxon>Bacteria</taxon>
        <taxon>Bacillati</taxon>
        <taxon>Bacillota</taxon>
        <taxon>Clostridia</taxon>
        <taxon>Eubacteriales</taxon>
        <taxon>Desulfotomaculaceae</taxon>
        <taxon>Pelotomaculum</taxon>
    </lineage>
</organism>
<feature type="chain" id="PRO_0000338881" description="Translation initiation factor IF-1">
    <location>
        <begin position="1"/>
        <end position="72"/>
    </location>
</feature>
<feature type="domain" description="S1-like" evidence="1">
    <location>
        <begin position="1"/>
        <end position="72"/>
    </location>
</feature>
<gene>
    <name evidence="1" type="primary">infA</name>
    <name type="ordered locus">PTH_0343</name>
</gene>
<comment type="function">
    <text evidence="1">One of the essential components for the initiation of protein synthesis. Stabilizes the binding of IF-2 and IF-3 on the 30S subunit to which N-formylmethionyl-tRNA(fMet) subsequently binds. Helps modulate mRNA selection, yielding the 30S pre-initiation complex (PIC). Upon addition of the 50S ribosomal subunit IF-1, IF-2 and IF-3 are released leaving the mature 70S translation initiation complex.</text>
</comment>
<comment type="subunit">
    <text evidence="1">Component of the 30S ribosomal translation pre-initiation complex which assembles on the 30S ribosome in the order IF-2 and IF-3, IF-1 and N-formylmethionyl-tRNA(fMet); mRNA recruitment can occur at any time during PIC assembly.</text>
</comment>
<comment type="subcellular location">
    <subcellularLocation>
        <location evidence="1">Cytoplasm</location>
    </subcellularLocation>
</comment>
<comment type="similarity">
    <text evidence="1">Belongs to the IF-1 family.</text>
</comment>
<keyword id="KW-0963">Cytoplasm</keyword>
<keyword id="KW-0396">Initiation factor</keyword>
<keyword id="KW-0648">Protein biosynthesis</keyword>
<keyword id="KW-1185">Reference proteome</keyword>
<keyword id="KW-0694">RNA-binding</keyword>
<keyword id="KW-0699">rRNA-binding</keyword>
<proteinExistence type="inferred from homology"/>
<evidence type="ECO:0000255" key="1">
    <source>
        <dbReference type="HAMAP-Rule" id="MF_00075"/>
    </source>
</evidence>
<protein>
    <recommendedName>
        <fullName evidence="1">Translation initiation factor IF-1</fullName>
    </recommendedName>
</protein>
<accession>A5D5E3</accession>
<reference key="1">
    <citation type="journal article" date="2008" name="Genome Res.">
        <title>The genome of Pelotomaculum thermopropionicum reveals niche-associated evolution in anaerobic microbiota.</title>
        <authorList>
            <person name="Kosaka T."/>
            <person name="Kato S."/>
            <person name="Shimoyama T."/>
            <person name="Ishii S."/>
            <person name="Abe T."/>
            <person name="Watanabe K."/>
        </authorList>
    </citation>
    <scope>NUCLEOTIDE SEQUENCE [LARGE SCALE GENOMIC DNA]</scope>
    <source>
        <strain>DSM 13744 / JCM 10971 / SI</strain>
    </source>
</reference>
<dbReference type="EMBL" id="AP009389">
    <property type="protein sequence ID" value="BAF58524.1"/>
    <property type="molecule type" value="Genomic_DNA"/>
</dbReference>
<dbReference type="SMR" id="A5D5E3"/>
<dbReference type="STRING" id="370438.PTH_0343"/>
<dbReference type="KEGG" id="pth:PTH_0343"/>
<dbReference type="eggNOG" id="COG0361">
    <property type="taxonomic scope" value="Bacteria"/>
</dbReference>
<dbReference type="HOGENOM" id="CLU_151267_1_0_9"/>
<dbReference type="Proteomes" id="UP000006556">
    <property type="component" value="Chromosome"/>
</dbReference>
<dbReference type="GO" id="GO:0005829">
    <property type="term" value="C:cytosol"/>
    <property type="evidence" value="ECO:0007669"/>
    <property type="project" value="TreeGrafter"/>
</dbReference>
<dbReference type="GO" id="GO:0043022">
    <property type="term" value="F:ribosome binding"/>
    <property type="evidence" value="ECO:0007669"/>
    <property type="project" value="UniProtKB-UniRule"/>
</dbReference>
<dbReference type="GO" id="GO:0019843">
    <property type="term" value="F:rRNA binding"/>
    <property type="evidence" value="ECO:0007669"/>
    <property type="project" value="UniProtKB-UniRule"/>
</dbReference>
<dbReference type="GO" id="GO:0003743">
    <property type="term" value="F:translation initiation factor activity"/>
    <property type="evidence" value="ECO:0007669"/>
    <property type="project" value="UniProtKB-UniRule"/>
</dbReference>
<dbReference type="CDD" id="cd04451">
    <property type="entry name" value="S1_IF1"/>
    <property type="match status" value="1"/>
</dbReference>
<dbReference type="FunFam" id="2.40.50.140:FF:000002">
    <property type="entry name" value="Translation initiation factor IF-1"/>
    <property type="match status" value="1"/>
</dbReference>
<dbReference type="Gene3D" id="2.40.50.140">
    <property type="entry name" value="Nucleic acid-binding proteins"/>
    <property type="match status" value="1"/>
</dbReference>
<dbReference type="HAMAP" id="MF_00075">
    <property type="entry name" value="IF_1"/>
    <property type="match status" value="1"/>
</dbReference>
<dbReference type="InterPro" id="IPR012340">
    <property type="entry name" value="NA-bd_OB-fold"/>
</dbReference>
<dbReference type="InterPro" id="IPR006196">
    <property type="entry name" value="RNA-binding_domain_S1_IF1"/>
</dbReference>
<dbReference type="InterPro" id="IPR003029">
    <property type="entry name" value="S1_domain"/>
</dbReference>
<dbReference type="InterPro" id="IPR004368">
    <property type="entry name" value="TIF_IF1"/>
</dbReference>
<dbReference type="NCBIfam" id="TIGR00008">
    <property type="entry name" value="infA"/>
    <property type="match status" value="1"/>
</dbReference>
<dbReference type="PANTHER" id="PTHR33370">
    <property type="entry name" value="TRANSLATION INITIATION FACTOR IF-1, CHLOROPLASTIC"/>
    <property type="match status" value="1"/>
</dbReference>
<dbReference type="PANTHER" id="PTHR33370:SF1">
    <property type="entry name" value="TRANSLATION INITIATION FACTOR IF-1, CHLOROPLASTIC"/>
    <property type="match status" value="1"/>
</dbReference>
<dbReference type="Pfam" id="PF01176">
    <property type="entry name" value="eIF-1a"/>
    <property type="match status" value="1"/>
</dbReference>
<dbReference type="SMART" id="SM00316">
    <property type="entry name" value="S1"/>
    <property type="match status" value="1"/>
</dbReference>
<dbReference type="SUPFAM" id="SSF50249">
    <property type="entry name" value="Nucleic acid-binding proteins"/>
    <property type="match status" value="1"/>
</dbReference>
<dbReference type="PROSITE" id="PS50832">
    <property type="entry name" value="S1_IF1_TYPE"/>
    <property type="match status" value="1"/>
</dbReference>
<name>IF1_PELTS</name>
<sequence length="72" mass="8300">MSKQDVIEVEGTVIEPLPNAMFRVELQNGHKVLAHVSGKIRMNFIRILAGDRVMVELSPYDLTRGRIVYRYK</sequence>